<reference key="1">
    <citation type="journal article" date="1996" name="Mol. Microbiol.">
        <title>Organizational characteristics and information content of an archaeal genome: 156 kb of sequence from Sulfolobus solfataricus P2.</title>
        <authorList>
            <person name="Sensen C.W."/>
            <person name="Klenk H.-P."/>
            <person name="Singh R.K."/>
            <person name="Allard G."/>
            <person name="Chan C.C.-Y."/>
            <person name="Liu Q.Y."/>
            <person name="Penny S.L."/>
            <person name="Young F."/>
            <person name="Schenk M.E."/>
            <person name="Gaasterland T."/>
            <person name="Doolittle W.F."/>
            <person name="Ragan M.A."/>
            <person name="Charlebois R.L."/>
        </authorList>
    </citation>
    <scope>NUCLEOTIDE SEQUENCE [GENOMIC DNA]</scope>
    <source>
        <strain>ATCC 35092 / DSM 1617 / JCM 11322 / P2</strain>
    </source>
</reference>
<reference key="2">
    <citation type="journal article" date="2001" name="Proc. Natl. Acad. Sci. U.S.A.">
        <title>The complete genome of the crenarchaeon Sulfolobus solfataricus P2.</title>
        <authorList>
            <person name="She Q."/>
            <person name="Singh R.K."/>
            <person name="Confalonieri F."/>
            <person name="Zivanovic Y."/>
            <person name="Allard G."/>
            <person name="Awayez M.J."/>
            <person name="Chan-Weiher C.C.-Y."/>
            <person name="Clausen I.G."/>
            <person name="Curtis B.A."/>
            <person name="De Moors A."/>
            <person name="Erauso G."/>
            <person name="Fletcher C."/>
            <person name="Gordon P.M.K."/>
            <person name="Heikamp-de Jong I."/>
            <person name="Jeffries A.C."/>
            <person name="Kozera C.J."/>
            <person name="Medina N."/>
            <person name="Peng X."/>
            <person name="Thi-Ngoc H.P."/>
            <person name="Redder P."/>
            <person name="Schenk M.E."/>
            <person name="Theriault C."/>
            <person name="Tolstrup N."/>
            <person name="Charlebois R.L."/>
            <person name="Doolittle W.F."/>
            <person name="Duguet M."/>
            <person name="Gaasterland T."/>
            <person name="Garrett R.A."/>
            <person name="Ragan M.A."/>
            <person name="Sensen C.W."/>
            <person name="Van der Oost J."/>
        </authorList>
    </citation>
    <scope>NUCLEOTIDE SEQUENCE [LARGE SCALE GENOMIC DNA]</scope>
    <source>
        <strain>ATCC 35092 / DSM 1617 / JCM 11322 / P2</strain>
    </source>
</reference>
<sequence>MFERFLSTETKYLRTSEIRDLLKLTEGKNVISLAGGLPDPQTFPVEEIKKIADDILLNSADKALQYTATAGISEFRRELVNLSRLRGISGIDERNVFVTVGSQEALFMIFNILLDPGDNVVVEAPTYLAALNAMRTRKPNFISITVTEMGPDLDELERKIKDAHSNGKKVKLMYVIPTAQNPAGTTMNTEDRKRLLEIASKYDFLIFEDDAYGFLVFEGESPPPIKAFDKEGRVIYTSTFSKILAPGLRLGWVIAHEDFIKEMELYKQNVDLHTPSLSQYIAMEAIRRGIIQNNLPKIRRVYKEKRDVMLEAIETYFPNDARWTKPVGGMFVFAWLPQKIDTTKMLEKALQRGVAYVPGSSFYADYSGKNTMRINFSFPKKEELIEGIKRLGDTIKHELST</sequence>
<keyword id="KW-0032">Aminotransferase</keyword>
<keyword id="KW-0963">Cytoplasm</keyword>
<keyword id="KW-0663">Pyridoxal phosphate</keyword>
<keyword id="KW-1185">Reference proteome</keyword>
<keyword id="KW-0808">Transferase</keyword>
<name>Y104_SACS2</name>
<organism>
    <name type="scientific">Saccharolobus solfataricus (strain ATCC 35092 / DSM 1617 / JCM 11322 / P2)</name>
    <name type="common">Sulfolobus solfataricus</name>
    <dbReference type="NCBI Taxonomy" id="273057"/>
    <lineage>
        <taxon>Archaea</taxon>
        <taxon>Thermoproteota</taxon>
        <taxon>Thermoprotei</taxon>
        <taxon>Sulfolobales</taxon>
        <taxon>Sulfolobaceae</taxon>
        <taxon>Saccharolobus</taxon>
    </lineage>
</organism>
<protein>
    <recommendedName>
        <fullName>Uncharacterized aminotransferase SSO0104</fullName>
        <ecNumber>2.6.1.-</ecNumber>
    </recommendedName>
    <alternativeName>
        <fullName>AspB-1</fullName>
    </alternativeName>
</protein>
<evidence type="ECO:0000250" key="1"/>
<evidence type="ECO:0000305" key="2"/>
<feature type="chain" id="PRO_0000123932" description="Uncharacterized aminotransferase SSO0104">
    <location>
        <begin position="1"/>
        <end position="401"/>
    </location>
</feature>
<feature type="modified residue" description="N6-(pyridoxal phosphate)lysine" evidence="1">
    <location>
        <position position="242"/>
    </location>
</feature>
<proteinExistence type="inferred from homology"/>
<comment type="cofactor">
    <cofactor evidence="1">
        <name>pyridoxal 5'-phosphate</name>
        <dbReference type="ChEBI" id="CHEBI:597326"/>
    </cofactor>
</comment>
<comment type="subunit">
    <text evidence="1">Homodimer.</text>
</comment>
<comment type="subcellular location">
    <subcellularLocation>
        <location evidence="1">Cytoplasm</location>
    </subcellularLocation>
</comment>
<comment type="similarity">
    <text evidence="2">Belongs to the class-I pyridoxal-phosphate-dependent aminotransferase family.</text>
</comment>
<dbReference type="EC" id="2.6.1.-"/>
<dbReference type="EMBL" id="Y08257">
    <property type="protein sequence ID" value="CAA69547.1"/>
    <property type="molecule type" value="Genomic_DNA"/>
</dbReference>
<dbReference type="EMBL" id="AE006641">
    <property type="protein sequence ID" value="AAK40460.1"/>
    <property type="molecule type" value="Genomic_DNA"/>
</dbReference>
<dbReference type="PIR" id="S75385">
    <property type="entry name" value="S75385"/>
</dbReference>
<dbReference type="RefSeq" id="WP_009988922.1">
    <property type="nucleotide sequence ID" value="NC_002754.1"/>
</dbReference>
<dbReference type="SMR" id="P95957"/>
<dbReference type="FunCoup" id="P95957">
    <property type="interactions" value="56"/>
</dbReference>
<dbReference type="STRING" id="273057.SSO0104"/>
<dbReference type="PaxDb" id="273057-SSO0104"/>
<dbReference type="EnsemblBacteria" id="AAK40460">
    <property type="protein sequence ID" value="AAK40460"/>
    <property type="gene ID" value="SSO0104"/>
</dbReference>
<dbReference type="KEGG" id="sso:SSO0104"/>
<dbReference type="PATRIC" id="fig|273057.12.peg.101"/>
<dbReference type="eggNOG" id="arCOG00492">
    <property type="taxonomic scope" value="Archaea"/>
</dbReference>
<dbReference type="HOGENOM" id="CLU_017584_0_6_2"/>
<dbReference type="InParanoid" id="P95957"/>
<dbReference type="PhylomeDB" id="P95957"/>
<dbReference type="Proteomes" id="UP000001974">
    <property type="component" value="Chromosome"/>
</dbReference>
<dbReference type="GO" id="GO:0005737">
    <property type="term" value="C:cytoplasm"/>
    <property type="evidence" value="ECO:0007669"/>
    <property type="project" value="UniProtKB-SubCell"/>
</dbReference>
<dbReference type="GO" id="GO:0030170">
    <property type="term" value="F:pyridoxal phosphate binding"/>
    <property type="evidence" value="ECO:0007669"/>
    <property type="project" value="InterPro"/>
</dbReference>
<dbReference type="GO" id="GO:0008483">
    <property type="term" value="F:transaminase activity"/>
    <property type="evidence" value="ECO:0000318"/>
    <property type="project" value="GO_Central"/>
</dbReference>
<dbReference type="GO" id="GO:1901605">
    <property type="term" value="P:alpha-amino acid metabolic process"/>
    <property type="evidence" value="ECO:0000318"/>
    <property type="project" value="GO_Central"/>
</dbReference>
<dbReference type="GO" id="GO:0009058">
    <property type="term" value="P:biosynthetic process"/>
    <property type="evidence" value="ECO:0007669"/>
    <property type="project" value="InterPro"/>
</dbReference>
<dbReference type="CDD" id="cd00609">
    <property type="entry name" value="AAT_like"/>
    <property type="match status" value="1"/>
</dbReference>
<dbReference type="FunFam" id="3.40.640.10:FF:000053">
    <property type="entry name" value="Aminotransferase, class I"/>
    <property type="match status" value="1"/>
</dbReference>
<dbReference type="Gene3D" id="3.90.1150.10">
    <property type="entry name" value="Aspartate Aminotransferase, domain 1"/>
    <property type="match status" value="1"/>
</dbReference>
<dbReference type="Gene3D" id="3.40.640.10">
    <property type="entry name" value="Type I PLP-dependent aspartate aminotransferase-like (Major domain)"/>
    <property type="match status" value="1"/>
</dbReference>
<dbReference type="InterPro" id="IPR004839">
    <property type="entry name" value="Aminotransferase_I/II_large"/>
</dbReference>
<dbReference type="InterPro" id="IPR050859">
    <property type="entry name" value="Class-I_PLP-dep_aminotransf"/>
</dbReference>
<dbReference type="InterPro" id="IPR015424">
    <property type="entry name" value="PyrdxlP-dep_Trfase"/>
</dbReference>
<dbReference type="InterPro" id="IPR015421">
    <property type="entry name" value="PyrdxlP-dep_Trfase_major"/>
</dbReference>
<dbReference type="InterPro" id="IPR015422">
    <property type="entry name" value="PyrdxlP-dep_Trfase_small"/>
</dbReference>
<dbReference type="PANTHER" id="PTHR42790">
    <property type="entry name" value="AMINOTRANSFERASE"/>
    <property type="match status" value="1"/>
</dbReference>
<dbReference type="PANTHER" id="PTHR42790:SF19">
    <property type="entry name" value="KYNURENINE_ALPHA-AMINOADIPATE AMINOTRANSFERASE, MITOCHONDRIAL"/>
    <property type="match status" value="1"/>
</dbReference>
<dbReference type="Pfam" id="PF00155">
    <property type="entry name" value="Aminotran_1_2"/>
    <property type="match status" value="1"/>
</dbReference>
<dbReference type="SUPFAM" id="SSF53383">
    <property type="entry name" value="PLP-dependent transferases"/>
    <property type="match status" value="1"/>
</dbReference>
<accession>P95957</accession>
<gene>
    <name type="ordered locus">SSO0104</name>
    <name type="ORF">C04018</name>
</gene>